<dbReference type="EMBL" id="CP001011">
    <property type="protein sequence ID" value="ACB91902.1"/>
    <property type="molecule type" value="Genomic_DNA"/>
</dbReference>
<dbReference type="RefSeq" id="WP_004090135.1">
    <property type="nucleotide sequence ID" value="NC_010577.1"/>
</dbReference>
<dbReference type="SMR" id="B2I8J1"/>
<dbReference type="GeneID" id="93904161"/>
<dbReference type="KEGG" id="xfn:XfasM23_0455"/>
<dbReference type="HOGENOM" id="CLU_072439_5_0_6"/>
<dbReference type="Proteomes" id="UP000001698">
    <property type="component" value="Chromosome"/>
</dbReference>
<dbReference type="GO" id="GO:1990904">
    <property type="term" value="C:ribonucleoprotein complex"/>
    <property type="evidence" value="ECO:0007669"/>
    <property type="project" value="UniProtKB-KW"/>
</dbReference>
<dbReference type="GO" id="GO:0005840">
    <property type="term" value="C:ribosome"/>
    <property type="evidence" value="ECO:0007669"/>
    <property type="project" value="UniProtKB-KW"/>
</dbReference>
<dbReference type="GO" id="GO:0019843">
    <property type="term" value="F:rRNA binding"/>
    <property type="evidence" value="ECO:0007669"/>
    <property type="project" value="UniProtKB-UniRule"/>
</dbReference>
<dbReference type="GO" id="GO:0003735">
    <property type="term" value="F:structural constituent of ribosome"/>
    <property type="evidence" value="ECO:0007669"/>
    <property type="project" value="InterPro"/>
</dbReference>
<dbReference type="GO" id="GO:0006412">
    <property type="term" value="P:translation"/>
    <property type="evidence" value="ECO:0007669"/>
    <property type="project" value="UniProtKB-UniRule"/>
</dbReference>
<dbReference type="FunFam" id="3.30.420.80:FF:000001">
    <property type="entry name" value="30S ribosomal protein S11"/>
    <property type="match status" value="1"/>
</dbReference>
<dbReference type="Gene3D" id="3.30.420.80">
    <property type="entry name" value="Ribosomal protein S11"/>
    <property type="match status" value="1"/>
</dbReference>
<dbReference type="HAMAP" id="MF_01310">
    <property type="entry name" value="Ribosomal_uS11"/>
    <property type="match status" value="1"/>
</dbReference>
<dbReference type="InterPro" id="IPR001971">
    <property type="entry name" value="Ribosomal_uS11"/>
</dbReference>
<dbReference type="InterPro" id="IPR019981">
    <property type="entry name" value="Ribosomal_uS11_bac-type"/>
</dbReference>
<dbReference type="InterPro" id="IPR018102">
    <property type="entry name" value="Ribosomal_uS11_CS"/>
</dbReference>
<dbReference type="InterPro" id="IPR036967">
    <property type="entry name" value="Ribosomal_uS11_sf"/>
</dbReference>
<dbReference type="NCBIfam" id="NF003698">
    <property type="entry name" value="PRK05309.1"/>
    <property type="match status" value="1"/>
</dbReference>
<dbReference type="NCBIfam" id="TIGR03632">
    <property type="entry name" value="uS11_bact"/>
    <property type="match status" value="1"/>
</dbReference>
<dbReference type="PANTHER" id="PTHR11759">
    <property type="entry name" value="40S RIBOSOMAL PROTEIN S14/30S RIBOSOMAL PROTEIN S11"/>
    <property type="match status" value="1"/>
</dbReference>
<dbReference type="Pfam" id="PF00411">
    <property type="entry name" value="Ribosomal_S11"/>
    <property type="match status" value="1"/>
</dbReference>
<dbReference type="PIRSF" id="PIRSF002131">
    <property type="entry name" value="Ribosomal_S11"/>
    <property type="match status" value="1"/>
</dbReference>
<dbReference type="SUPFAM" id="SSF53137">
    <property type="entry name" value="Translational machinery components"/>
    <property type="match status" value="1"/>
</dbReference>
<dbReference type="PROSITE" id="PS00054">
    <property type="entry name" value="RIBOSOMAL_S11"/>
    <property type="match status" value="1"/>
</dbReference>
<name>RS11_XYLF2</name>
<feature type="chain" id="PRO_1000141161" description="Small ribosomal subunit protein uS11">
    <location>
        <begin position="1"/>
        <end position="130"/>
    </location>
</feature>
<protein>
    <recommendedName>
        <fullName evidence="1">Small ribosomal subunit protein uS11</fullName>
    </recommendedName>
    <alternativeName>
        <fullName evidence="2">30S ribosomal protein S11</fullName>
    </alternativeName>
</protein>
<comment type="function">
    <text evidence="1">Located on the platform of the 30S subunit, it bridges several disparate RNA helices of the 16S rRNA. Forms part of the Shine-Dalgarno cleft in the 70S ribosome.</text>
</comment>
<comment type="subunit">
    <text evidence="1">Part of the 30S ribosomal subunit. Interacts with proteins S7 and S18. Binds to IF-3.</text>
</comment>
<comment type="similarity">
    <text evidence="1">Belongs to the universal ribosomal protein uS11 family.</text>
</comment>
<sequence length="130" mass="14086">MSKQSVVKTKKRVKRVITDGVAHICASFNNTIVTITDRQGNSLFWCTSGASGFRGSRKCTPFAAQVAAEKAGRAVLDYGMKSLEVRINGPGPGRESAVRSLSNVGYKITNIIDVTPIPHNGCRPPKKRRV</sequence>
<accession>B2I8J1</accession>
<gene>
    <name evidence="1" type="primary">rpsK</name>
    <name type="ordered locus">XfasM23_0455</name>
</gene>
<proteinExistence type="inferred from homology"/>
<keyword id="KW-0687">Ribonucleoprotein</keyword>
<keyword id="KW-0689">Ribosomal protein</keyword>
<keyword id="KW-0694">RNA-binding</keyword>
<keyword id="KW-0699">rRNA-binding</keyword>
<organism>
    <name type="scientific">Xylella fastidiosa (strain M23)</name>
    <dbReference type="NCBI Taxonomy" id="405441"/>
    <lineage>
        <taxon>Bacteria</taxon>
        <taxon>Pseudomonadati</taxon>
        <taxon>Pseudomonadota</taxon>
        <taxon>Gammaproteobacteria</taxon>
        <taxon>Lysobacterales</taxon>
        <taxon>Lysobacteraceae</taxon>
        <taxon>Xylella</taxon>
    </lineage>
</organism>
<reference key="1">
    <citation type="journal article" date="2010" name="J. Bacteriol.">
        <title>Whole genome sequences of two Xylella fastidiosa strains (M12 and M23) causing almond leaf scorch disease in California.</title>
        <authorList>
            <person name="Chen J."/>
            <person name="Xie G."/>
            <person name="Han S."/>
            <person name="Chertkov O."/>
            <person name="Sims D."/>
            <person name="Civerolo E.L."/>
        </authorList>
    </citation>
    <scope>NUCLEOTIDE SEQUENCE [LARGE SCALE GENOMIC DNA]</scope>
    <source>
        <strain>M23</strain>
    </source>
</reference>
<evidence type="ECO:0000255" key="1">
    <source>
        <dbReference type="HAMAP-Rule" id="MF_01310"/>
    </source>
</evidence>
<evidence type="ECO:0000305" key="2"/>